<sequence length="1217" mass="138412">MIRNSTNTNNIMETEVALKDWILYYHKLCEVNSGEIFSGNEIITDFDDPVLSDPLLNLKPLPKNEVTVNKDNVIKDNDYSSNGCDFAKSKFHIKGLVGLLTTASVYIGLDNSTNPSYDISQACEFDLEDNTVQQGTGRSANMNPACKVAGFNKSSVRDTIFNIFKIPKKDEKISNDMEVNNTLSRDLDYKKDLFEFVRKYFGISEEETLIGHYTGWLLQEVLIQGNLFITNSSLVYLAHLPKLTDAVVLCGKLKLRSRLKGNPRYWCVLKHSTLALYNDPSDIYFPILSIDLNHVEEISLENSLKDENTMTFVLEASSKNYKFIAGSSHSAKTWVKCLKKQLFSIKNQSKDTIGIKFPISSIIDVECQSYMNQGQSIKVKCFDGNKNYALKEYTFLFFDKDGDSFYNIISNFIPRNMNPVEASLQNSNPTIHLNSKSHFNDKIKILSAVNIDDIICDTDSFEMTSSDILSDIDENIQPLSLKHVRDISNCKNYLKEDLKTSNKMTIQDCNKKVQTSEIQLITYSKHDSRMELNDDSKYYQGNIGNDNKGILSFKNICSIWNTSPIHNKDSDNFFMTSDPFVTSINDTTLAKIKDWFNLHDNEVLHALYYAYLIKGYPVYGKLYVTNRRLYFKSCIPGVNVKMVLPLEDIEGYNEILGTNYGNFGILLTVQNEKELQFGFNSCTNRSDFENVLQRCLDICKYAIKTPELVTSRVIESESEHSRLRFFEEKFSTEGIDIPFLVEDNPYFKTKIMPTKSYNFGFLTIGSRGDVQPYIALAKGLIQEGHSVTIITHREFKSFVECHGIDFKEIAGDPTKLMSLMVEHEAINVGMLMEASSKFRGWIHDLLVTTWEACKNLKLDILIESPSAMAGIHISEALQIPYFRAFTMPWTRTRAYPHAFIVPDQKRGGSFNYLTHVIFENVFWRGICSQVNKWRVQTLGLEKTNLAQLQQNKIPFLYNISPVIFPPAIDFDEWIKVTGYWFLDESESFEPSQELETFISKARKLGKKLVYIGFGSIVVNNAKEMTRAVIDSVLETDIFCILNKGWSERLGKEELRYEEEPEYPETIFLCDSIPHDWLFPKVDAAVHHGGSGTTGATLKAGTPVVIKPFFGDQFFFASRIEDIGAGIALKKLNVSSLSNAIKKVLTDKSIKRKAVSLKKRVAKENGVTTAINCIYSELEYARSLVVKKNHKSSNIEFIQHPNNVNDTTKTVIPLTSMV</sequence>
<proteinExistence type="inferred from homology"/>
<accession>A7TF84</accession>
<reference key="1">
    <citation type="journal article" date="2007" name="Proc. Natl. Acad. Sci. U.S.A.">
        <title>Independent sorting-out of thousands of duplicated gene pairs in two yeast species descended from a whole-genome duplication.</title>
        <authorList>
            <person name="Scannell D.R."/>
            <person name="Frank A.C."/>
            <person name="Conant G.C."/>
            <person name="Byrne K.P."/>
            <person name="Woolfit M."/>
            <person name="Wolfe K.H."/>
        </authorList>
    </citation>
    <scope>NUCLEOTIDE SEQUENCE [LARGE SCALE GENOMIC DNA]</scope>
    <source>
        <strain>ATCC 22028 / DSM 70294 / BCRC 21397 / CBS 2163 / NBRC 10782 / NRRL Y-8283 / UCD 57-17</strain>
    </source>
</reference>
<keyword id="KW-0963">Cytoplasm</keyword>
<keyword id="KW-0328">Glycosyltransferase</keyword>
<keyword id="KW-0444">Lipid biosynthesis</keyword>
<keyword id="KW-0443">Lipid metabolism</keyword>
<keyword id="KW-0472">Membrane</keyword>
<keyword id="KW-1185">Reference proteome</keyword>
<keyword id="KW-0677">Repeat</keyword>
<keyword id="KW-0752">Steroid biosynthesis</keyword>
<keyword id="KW-0753">Steroid metabolism</keyword>
<keyword id="KW-0756">Sterol biosynthesis</keyword>
<keyword id="KW-1207">Sterol metabolism</keyword>
<keyword id="KW-0808">Transferase</keyword>
<evidence type="ECO:0000250" key="1">
    <source>
        <dbReference type="UniProtKB" id="Q06321"/>
    </source>
</evidence>
<evidence type="ECO:0000255" key="2"/>
<evidence type="ECO:0000255" key="3">
    <source>
        <dbReference type="PROSITE-ProRule" id="PRU00145"/>
    </source>
</evidence>
<evidence type="ECO:0000305" key="4"/>
<dbReference type="EC" id="2.4.1.-" evidence="1"/>
<dbReference type="EC" id="2.4.1.173" evidence="1"/>
<dbReference type="EMBL" id="DS480382">
    <property type="protein sequence ID" value="EDO19109.1"/>
    <property type="molecule type" value="Genomic_DNA"/>
</dbReference>
<dbReference type="RefSeq" id="XP_001646967.1">
    <property type="nucleotide sequence ID" value="XM_001646917.1"/>
</dbReference>
<dbReference type="SMR" id="A7TF84"/>
<dbReference type="FunCoup" id="A7TF84">
    <property type="interactions" value="127"/>
</dbReference>
<dbReference type="STRING" id="436907.A7TF84"/>
<dbReference type="GeneID" id="5547438"/>
<dbReference type="KEGG" id="vpo:Kpol_2000p77"/>
<dbReference type="eggNOG" id="KOG1192">
    <property type="taxonomic scope" value="Eukaryota"/>
</dbReference>
<dbReference type="HOGENOM" id="CLU_000537_6_0_1"/>
<dbReference type="InParanoid" id="A7TF84"/>
<dbReference type="OMA" id="WRNKTLG"/>
<dbReference type="OrthoDB" id="10261837at2759"/>
<dbReference type="PhylomeDB" id="A7TF84"/>
<dbReference type="Proteomes" id="UP000000267">
    <property type="component" value="Unassembled WGS sequence"/>
</dbReference>
<dbReference type="GO" id="GO:0005737">
    <property type="term" value="C:cytoplasm"/>
    <property type="evidence" value="ECO:0007669"/>
    <property type="project" value="UniProtKB-SubCell"/>
</dbReference>
<dbReference type="GO" id="GO:0016020">
    <property type="term" value="C:membrane"/>
    <property type="evidence" value="ECO:0007669"/>
    <property type="project" value="UniProtKB-SubCell"/>
</dbReference>
<dbReference type="GO" id="GO:0016906">
    <property type="term" value="F:sterol 3-beta-glucosyltransferase activity"/>
    <property type="evidence" value="ECO:0007669"/>
    <property type="project" value="UniProtKB-EC"/>
</dbReference>
<dbReference type="GO" id="GO:0032120">
    <property type="term" value="P:ascospore-type prospore membrane formation"/>
    <property type="evidence" value="ECO:0007669"/>
    <property type="project" value="EnsemblFungi"/>
</dbReference>
<dbReference type="GO" id="GO:0005975">
    <property type="term" value="P:carbohydrate metabolic process"/>
    <property type="evidence" value="ECO:0007669"/>
    <property type="project" value="InterPro"/>
</dbReference>
<dbReference type="GO" id="GO:0030259">
    <property type="term" value="P:lipid glycosylation"/>
    <property type="evidence" value="ECO:0007669"/>
    <property type="project" value="InterPro"/>
</dbReference>
<dbReference type="GO" id="GO:0016126">
    <property type="term" value="P:sterol biosynthetic process"/>
    <property type="evidence" value="ECO:0007669"/>
    <property type="project" value="UniProtKB-KW"/>
</dbReference>
<dbReference type="CDD" id="cd03784">
    <property type="entry name" value="GT1_Gtf-like"/>
    <property type="match status" value="1"/>
</dbReference>
<dbReference type="CDD" id="cd13215">
    <property type="entry name" value="PH-GRAM1_AGT26"/>
    <property type="match status" value="1"/>
</dbReference>
<dbReference type="CDD" id="cd13216">
    <property type="entry name" value="PH-GRAM2_AGT26"/>
    <property type="match status" value="1"/>
</dbReference>
<dbReference type="FunFam" id="3.40.50.2000:FF:000029">
    <property type="entry name" value="Sterol 3-beta-glucosyltransferase"/>
    <property type="match status" value="1"/>
</dbReference>
<dbReference type="FunFam" id="3.40.50.2000:FF:000009">
    <property type="entry name" value="Sterol 3-beta-glucosyltransferase UGT80A2"/>
    <property type="match status" value="1"/>
</dbReference>
<dbReference type="Gene3D" id="3.40.50.2000">
    <property type="entry name" value="Glycogen Phosphorylase B"/>
    <property type="match status" value="2"/>
</dbReference>
<dbReference type="Gene3D" id="2.30.29.30">
    <property type="entry name" value="Pleckstrin-homology domain (PH domain)/Phosphotyrosine-binding domain (PTB)"/>
    <property type="match status" value="2"/>
</dbReference>
<dbReference type="InterPro" id="IPR048066">
    <property type="entry name" value="ATG26_PH_GRAM1"/>
</dbReference>
<dbReference type="InterPro" id="IPR048065">
    <property type="entry name" value="ATG26_PH_GRAM2"/>
</dbReference>
<dbReference type="InterPro" id="IPR010610">
    <property type="entry name" value="EryCIII-like_C"/>
</dbReference>
<dbReference type="InterPro" id="IPR050426">
    <property type="entry name" value="Glycosyltransferase_28"/>
</dbReference>
<dbReference type="InterPro" id="IPR004276">
    <property type="entry name" value="GlycoTrans_28_N"/>
</dbReference>
<dbReference type="InterPro" id="IPR004182">
    <property type="entry name" value="GRAM"/>
</dbReference>
<dbReference type="InterPro" id="IPR011993">
    <property type="entry name" value="PH-like_dom_sf"/>
</dbReference>
<dbReference type="InterPro" id="IPR001849">
    <property type="entry name" value="PH_domain"/>
</dbReference>
<dbReference type="InterPro" id="IPR002213">
    <property type="entry name" value="UDP_glucos_trans"/>
</dbReference>
<dbReference type="PANTHER" id="PTHR48050">
    <property type="entry name" value="STEROL 3-BETA-GLUCOSYLTRANSFERASE"/>
    <property type="match status" value="1"/>
</dbReference>
<dbReference type="PANTHER" id="PTHR48050:SF25">
    <property type="entry name" value="STEROL 3-BETA-GLUCOSYLTRANSFERASE"/>
    <property type="match status" value="1"/>
</dbReference>
<dbReference type="Pfam" id="PF06722">
    <property type="entry name" value="EryCIII-like_C"/>
    <property type="match status" value="1"/>
</dbReference>
<dbReference type="Pfam" id="PF03033">
    <property type="entry name" value="Glyco_transf_28"/>
    <property type="match status" value="1"/>
</dbReference>
<dbReference type="Pfam" id="PF02893">
    <property type="entry name" value="GRAM"/>
    <property type="match status" value="1"/>
</dbReference>
<dbReference type="Pfam" id="PF00169">
    <property type="entry name" value="PH"/>
    <property type="match status" value="1"/>
</dbReference>
<dbReference type="SMART" id="SM00568">
    <property type="entry name" value="GRAM"/>
    <property type="match status" value="2"/>
</dbReference>
<dbReference type="SMART" id="SM00233">
    <property type="entry name" value="PH"/>
    <property type="match status" value="1"/>
</dbReference>
<dbReference type="SUPFAM" id="SSF50729">
    <property type="entry name" value="PH domain-like"/>
    <property type="match status" value="1"/>
</dbReference>
<dbReference type="SUPFAM" id="SSF53756">
    <property type="entry name" value="UDP-Glycosyltransferase/glycogen phosphorylase"/>
    <property type="match status" value="1"/>
</dbReference>
<dbReference type="PROSITE" id="PS50003">
    <property type="entry name" value="PH_DOMAIN"/>
    <property type="match status" value="1"/>
</dbReference>
<organism>
    <name type="scientific">Vanderwaltozyma polyspora (strain ATCC 22028 / DSM 70294 / BCRC 21397 / CBS 2163 / NBRC 10782 / NRRL Y-8283 / UCD 57-17)</name>
    <name type="common">Kluyveromyces polysporus</name>
    <dbReference type="NCBI Taxonomy" id="436907"/>
    <lineage>
        <taxon>Eukaryota</taxon>
        <taxon>Fungi</taxon>
        <taxon>Dikarya</taxon>
        <taxon>Ascomycota</taxon>
        <taxon>Saccharomycotina</taxon>
        <taxon>Saccharomycetes</taxon>
        <taxon>Saccharomycetales</taxon>
        <taxon>Saccharomycetaceae</taxon>
        <taxon>Vanderwaltozyma</taxon>
    </lineage>
</organism>
<gene>
    <name evidence="1" type="primary">ATG26</name>
    <name type="ORF">Kpol_2000p77</name>
</gene>
<name>ATG26_VANPO</name>
<comment type="function">
    <text evidence="1">Sterol glycosyltransferase responsible for the glycosylation of ergosterol to form ergosterol-glucoside.</text>
</comment>
<comment type="catalytic activity">
    <reaction evidence="1">
        <text>a sterol + UDP-alpha-D-glucose = a sterol 3-beta-D-glucoside + UDP + H(+)</text>
        <dbReference type="Rhea" id="RHEA:22724"/>
        <dbReference type="ChEBI" id="CHEBI:15378"/>
        <dbReference type="ChEBI" id="CHEBI:15889"/>
        <dbReference type="ChEBI" id="CHEBI:37424"/>
        <dbReference type="ChEBI" id="CHEBI:58223"/>
        <dbReference type="ChEBI" id="CHEBI:58885"/>
        <dbReference type="EC" id="2.4.1.173"/>
    </reaction>
    <physiologicalReaction direction="left-to-right" evidence="1">
        <dbReference type="Rhea" id="RHEA:22725"/>
    </physiologicalReaction>
</comment>
<comment type="catalytic activity">
    <reaction evidence="1">
        <text>ergosterol + UDP-alpha-D-glucose = ergosteryl 3-beta-D-glucoside + UDP + H(+)</text>
        <dbReference type="Rhea" id="RHEA:61836"/>
        <dbReference type="ChEBI" id="CHEBI:15378"/>
        <dbReference type="ChEBI" id="CHEBI:16933"/>
        <dbReference type="ChEBI" id="CHEBI:52973"/>
        <dbReference type="ChEBI" id="CHEBI:58223"/>
        <dbReference type="ChEBI" id="CHEBI:58885"/>
    </reaction>
    <physiologicalReaction direction="left-to-right" evidence="1">
        <dbReference type="Rhea" id="RHEA:61837"/>
    </physiologicalReaction>
</comment>
<comment type="subcellular location">
    <subcellularLocation>
        <location evidence="1">Cytoplasm</location>
    </subcellularLocation>
    <subcellularLocation>
        <location evidence="1">Membrane</location>
        <topology evidence="1">Peripheral membrane protein</topology>
    </subcellularLocation>
</comment>
<comment type="similarity">
    <text evidence="4">Belongs to the glycosyltransferase 28 family.</text>
</comment>
<protein>
    <recommendedName>
        <fullName evidence="4">Sterol 3-beta-glucosyltransferase</fullName>
        <ecNumber evidence="1">2.4.1.-</ecNumber>
        <ecNumber evidence="1">2.4.1.173</ecNumber>
    </recommendedName>
    <alternativeName>
        <fullName evidence="1">Autophagy-related protein 26</fullName>
    </alternativeName>
</protein>
<feature type="chain" id="PRO_0000318049" description="Sterol 3-beta-glucosyltransferase">
    <location>
        <begin position="1"/>
        <end position="1217"/>
    </location>
</feature>
<feature type="domain" description="GRAM 1" evidence="2">
    <location>
        <begin position="195"/>
        <end position="232"/>
    </location>
</feature>
<feature type="domain" description="PH" evidence="3">
    <location>
        <begin position="246"/>
        <end position="343"/>
    </location>
</feature>
<feature type="domain" description="GRAM 2" evidence="2">
    <location>
        <begin position="590"/>
        <end position="656"/>
    </location>
</feature>
<feature type="binding site" evidence="1">
    <location>
        <position position="766"/>
    </location>
    <ligand>
        <name>UDP-alpha-D-glucose</name>
        <dbReference type="ChEBI" id="CHEBI:58885"/>
    </ligand>
</feature>
<feature type="binding site" evidence="1">
    <location>
        <position position="767"/>
    </location>
    <ligand>
        <name>UDP-alpha-D-glucose</name>
        <dbReference type="ChEBI" id="CHEBI:58885"/>
    </ligand>
</feature>
<feature type="binding site" evidence="1">
    <location>
        <position position="769"/>
    </location>
    <ligand>
        <name>UDP-alpha-D-glucose</name>
        <dbReference type="ChEBI" id="CHEBI:58885"/>
    </ligand>
</feature>
<feature type="binding site" evidence="1">
    <location>
        <position position="1042"/>
    </location>
    <ligand>
        <name>UDP-alpha-D-glucose</name>
        <dbReference type="ChEBI" id="CHEBI:58885"/>
    </ligand>
</feature>
<feature type="binding site" evidence="1">
    <location>
        <position position="1072"/>
    </location>
    <ligand>
        <name>UDP-alpha-D-glucose</name>
        <dbReference type="ChEBI" id="CHEBI:58885"/>
    </ligand>
</feature>
<feature type="binding site" evidence="1">
    <location>
        <position position="1074"/>
    </location>
    <ligand>
        <name>UDP-alpha-D-glucose</name>
        <dbReference type="ChEBI" id="CHEBI:58885"/>
    </ligand>
</feature>
<feature type="binding site" evidence="1">
    <location>
        <position position="1087"/>
    </location>
    <ligand>
        <name>UDP-alpha-D-glucose</name>
        <dbReference type="ChEBI" id="CHEBI:58885"/>
    </ligand>
</feature>
<feature type="binding site" evidence="1">
    <location>
        <position position="1090"/>
    </location>
    <ligand>
        <name>UDP-alpha-D-glucose</name>
        <dbReference type="ChEBI" id="CHEBI:58885"/>
    </ligand>
</feature>
<feature type="binding site" evidence="1">
    <location>
        <position position="1091"/>
    </location>
    <ligand>
        <name>UDP-alpha-D-glucose</name>
        <dbReference type="ChEBI" id="CHEBI:58885"/>
    </ligand>
</feature>
<feature type="binding site" evidence="1">
    <location>
        <position position="1092"/>
    </location>
    <ligand>
        <name>UDP-alpha-D-glucose</name>
        <dbReference type="ChEBI" id="CHEBI:58885"/>
    </ligand>
</feature>
<feature type="binding site" evidence="1">
    <location>
        <position position="1111"/>
    </location>
    <ligand>
        <name>UDP-alpha-D-glucose</name>
        <dbReference type="ChEBI" id="CHEBI:58885"/>
    </ligand>
</feature>
<feature type="binding site" evidence="1">
    <location>
        <position position="1112"/>
    </location>
    <ligand>
        <name>UDP-alpha-D-glucose</name>
        <dbReference type="ChEBI" id="CHEBI:58885"/>
    </ligand>
</feature>